<dbReference type="EC" id="3.2.1.183"/>
<dbReference type="EMBL" id="AE002098">
    <property type="protein sequence ID" value="AAF40537.1"/>
    <property type="molecule type" value="Genomic_DNA"/>
</dbReference>
<dbReference type="PIR" id="A53384">
    <property type="entry name" value="A53384"/>
</dbReference>
<dbReference type="PIR" id="S60758">
    <property type="entry name" value="S60758"/>
</dbReference>
<dbReference type="RefSeq" id="NP_273134.1">
    <property type="nucleotide sequence ID" value="NC_003112.2"/>
</dbReference>
<dbReference type="SMR" id="H2VFI5"/>
<dbReference type="STRING" id="122586.NMB0070"/>
<dbReference type="PaxDb" id="122586-NMB0070"/>
<dbReference type="KEGG" id="nme:NMB0070"/>
<dbReference type="PATRIC" id="fig|122586.8.peg.104"/>
<dbReference type="HOGENOM" id="CLU_061127_0_0_4"/>
<dbReference type="InParanoid" id="H2VFI5"/>
<dbReference type="OrthoDB" id="9803238at2"/>
<dbReference type="Proteomes" id="UP000000425">
    <property type="component" value="Chromosome"/>
</dbReference>
<dbReference type="GO" id="GO:0004553">
    <property type="term" value="F:hydrolase activity, hydrolyzing O-glycosyl compounds"/>
    <property type="evidence" value="ECO:0007669"/>
    <property type="project" value="InterPro"/>
</dbReference>
<dbReference type="GO" id="GO:0016853">
    <property type="term" value="F:isomerase activity"/>
    <property type="evidence" value="ECO:0007669"/>
    <property type="project" value="UniProtKB-KW"/>
</dbReference>
<dbReference type="GO" id="GO:0005975">
    <property type="term" value="P:carbohydrate metabolic process"/>
    <property type="evidence" value="ECO:0007669"/>
    <property type="project" value="UniProtKB-ARBA"/>
</dbReference>
<dbReference type="GO" id="GO:0006047">
    <property type="term" value="P:UDP-N-acetylglucosamine metabolic process"/>
    <property type="evidence" value="ECO:0007669"/>
    <property type="project" value="InterPro"/>
</dbReference>
<dbReference type="Gene3D" id="3.40.50.2000">
    <property type="entry name" value="Glycogen Phosphorylase B"/>
    <property type="match status" value="2"/>
</dbReference>
<dbReference type="InterPro" id="IPR020004">
    <property type="entry name" value="UDP-GlcNAc_Epase"/>
</dbReference>
<dbReference type="InterPro" id="IPR003331">
    <property type="entry name" value="UDP_GlcNAc_Epimerase_2_dom"/>
</dbReference>
<dbReference type="InterPro" id="IPR029767">
    <property type="entry name" value="WecB-like"/>
</dbReference>
<dbReference type="NCBIfam" id="TIGR03568">
    <property type="entry name" value="NeuC_NnaA"/>
    <property type="match status" value="1"/>
</dbReference>
<dbReference type="PANTHER" id="PTHR43174">
    <property type="entry name" value="UDP-N-ACETYLGLUCOSAMINE 2-EPIMERASE"/>
    <property type="match status" value="1"/>
</dbReference>
<dbReference type="PANTHER" id="PTHR43174:SF3">
    <property type="entry name" value="UDP-N-ACETYLGLUCOSAMINE 2-EPIMERASE"/>
    <property type="match status" value="1"/>
</dbReference>
<dbReference type="Pfam" id="PF02350">
    <property type="entry name" value="Epimerase_2"/>
    <property type="match status" value="1"/>
</dbReference>
<dbReference type="SUPFAM" id="SSF53756">
    <property type="entry name" value="UDP-Glycosyltransferase/glycogen phosphorylase"/>
    <property type="match status" value="1"/>
</dbReference>
<protein>
    <recommendedName>
        <fullName>UDP-N-acetylglucosamine 2-epimerase</fullName>
        <ecNumber>3.2.1.183</ecNumber>
    </recommendedName>
</protein>
<keyword id="KW-0378">Hydrolase</keyword>
<keyword id="KW-0413">Isomerase</keyword>
<keyword id="KW-1185">Reference proteome</keyword>
<accession>H2VFI5</accession>
<evidence type="ECO:0000250" key="1"/>
<evidence type="ECO:0000269" key="2">
    <source>
    </source>
</evidence>
<evidence type="ECO:0000305" key="3"/>
<evidence type="ECO:0000305" key="4">
    <source>
    </source>
</evidence>
<sequence>MKRILCITGTRADFGKLKPLLAYIENHPDLELHLIVTGMHMMKTYGRTYKEVTRENYQHTYLFSNQIQGEPMGAVLGNTITFISRLSDEIEPDMVMIHGDRLEALAGAAVGALSSRLVCHIEGGELSGTVDDSIRHSISKLSHIHLVANEQAVTRLVQMGEKRKHIHIIGSPDLDVMASSTLPSLEEVKEYYGLPYENYGISMFHPVTTEAHLMPQYAAQYFKALELSGQNIISIYPNNDTGTESILQELLKYQSDKFIAFPSIRFEYFLVLLKHAKFMVGNSSAGIREAPLYGVPSIDVGTRQSNRHMGKSIIHTDYETKNIFDAIQQACSLGKFEADDTFNGGDTRTSTERFAEVINNPETWNVSAQKRFIDLNL</sequence>
<organism>
    <name type="scientific">Neisseria meningitidis serogroup B (strain ATCC BAA-335 / MC58)</name>
    <dbReference type="NCBI Taxonomy" id="122586"/>
    <lineage>
        <taxon>Bacteria</taxon>
        <taxon>Pseudomonadati</taxon>
        <taxon>Pseudomonadota</taxon>
        <taxon>Betaproteobacteria</taxon>
        <taxon>Neisseriales</taxon>
        <taxon>Neisseriaceae</taxon>
        <taxon>Neisseria</taxon>
    </lineage>
</organism>
<gene>
    <name type="primary">siaA</name>
    <name type="synonym">synX</name>
    <name type="ordered locus">NMB0070</name>
</gene>
<feature type="chain" id="PRO_0000421996" description="UDP-N-acetylglucosamine 2-epimerase">
    <location>
        <begin position="1"/>
        <end position="377"/>
    </location>
</feature>
<feature type="active site" evidence="1">
    <location>
        <position position="212"/>
    </location>
</feature>
<feature type="mutagenesis site" description="Strongly decreased activity." evidence="2">
    <original>D</original>
    <variation>N</variation>
    <location>
        <position position="100"/>
    </location>
</feature>
<feature type="mutagenesis site" description="Strongly decreased activity." evidence="2">
    <original>E</original>
    <variation>Q</variation>
    <location>
        <position position="122"/>
    </location>
</feature>
<feature type="mutagenesis site" description="Strongly decreased activity." evidence="2">
    <original>D</original>
    <variation>Q</variation>
    <location>
        <position position="131"/>
    </location>
</feature>
<comment type="function">
    <text evidence="2">Catalyzes the conversion of UDP-N-acetylglucosamine (UDP-GlcNAc) to UDP and N-acetyl-D-mannosamine (ManNAc).</text>
</comment>
<comment type="catalytic activity">
    <reaction evidence="2">
        <text>UDP-N-acetyl-alpha-D-glucosamine + H2O = aldehydo-N-acetyl-D-mannosamine + UDP + H(+)</text>
        <dbReference type="Rhea" id="RHEA:30683"/>
        <dbReference type="ChEBI" id="CHEBI:15377"/>
        <dbReference type="ChEBI" id="CHEBI:15378"/>
        <dbReference type="ChEBI" id="CHEBI:17122"/>
        <dbReference type="ChEBI" id="CHEBI:57705"/>
        <dbReference type="ChEBI" id="CHEBI:58223"/>
        <dbReference type="EC" id="3.2.1.183"/>
    </reaction>
</comment>
<comment type="biophysicochemical properties">
    <kinetics>
        <KM evidence="2">1.49 mM for UDP-N-acetyl-alpha-D-glucosamine</KM>
        <text>kcat is 4.7 sec(-1).</text>
    </kinetics>
</comment>
<comment type="subunit">
    <text evidence="4">Homodimer.</text>
</comment>
<comment type="similarity">
    <text evidence="3">Belongs to the UDP-N-acetylglucosamine 2-epimerase family.</text>
</comment>
<reference key="1">
    <citation type="journal article" date="2000" name="Science">
        <title>Complete genome sequence of Neisseria meningitidis serogroup B strain MC58.</title>
        <authorList>
            <person name="Tettelin H."/>
            <person name="Saunders N.J."/>
            <person name="Heidelberg J.F."/>
            <person name="Jeffries A.C."/>
            <person name="Nelson K.E."/>
            <person name="Eisen J.A."/>
            <person name="Ketchum K.A."/>
            <person name="Hood D.W."/>
            <person name="Peden J.F."/>
            <person name="Dodson R.J."/>
            <person name="Nelson W.C."/>
            <person name="Gwinn M.L."/>
            <person name="DeBoy R.T."/>
            <person name="Peterson J.D."/>
            <person name="Hickey E.K."/>
            <person name="Haft D.H."/>
            <person name="Salzberg S.L."/>
            <person name="White O."/>
            <person name="Fleischmann R.D."/>
            <person name="Dougherty B.A."/>
            <person name="Mason T.M."/>
            <person name="Ciecko A."/>
            <person name="Parksey D.S."/>
            <person name="Blair E."/>
            <person name="Cittone H."/>
            <person name="Clark E.B."/>
            <person name="Cotton M.D."/>
            <person name="Utterback T.R."/>
            <person name="Khouri H.M."/>
            <person name="Qin H."/>
            <person name="Vamathevan J.J."/>
            <person name="Gill J."/>
            <person name="Scarlato V."/>
            <person name="Masignani V."/>
            <person name="Pizza M."/>
            <person name="Grandi G."/>
            <person name="Sun L."/>
            <person name="Smith H.O."/>
            <person name="Fraser C.M."/>
            <person name="Moxon E.R."/>
            <person name="Rappuoli R."/>
            <person name="Venter J.C."/>
        </authorList>
    </citation>
    <scope>NUCLEOTIDE SEQUENCE [LARGE SCALE GENOMIC DNA]</scope>
    <source>
        <strain>ATCC BAA-335 / MC58</strain>
    </source>
</reference>
<reference key="2">
    <citation type="journal article" date="2004" name="Biochemistry">
        <title>Identification and mechanism of a bacterial hydrolyzing UDP-N-acetylglucosamine 2-epimerase.</title>
        <authorList>
            <person name="Murkin A.S."/>
            <person name="Chou W.K."/>
            <person name="Wakarchuk W.W."/>
            <person name="Tanner M.E."/>
        </authorList>
    </citation>
    <scope>FUNCTION</scope>
    <scope>CATALYTIC ACTIVITY</scope>
    <scope>BIOPHYSICOCHEMICAL PROPERTIES</scope>
    <scope>SUBUNIT</scope>
    <scope>MUTAGENESIS OF ASP-100; GLU-122 AND ASP-131</scope>
    <source>
        <strain>ATCC BAA-335 / MC58</strain>
    </source>
</reference>
<proteinExistence type="evidence at protein level"/>
<name>SIAA_NEIMB</name>